<feature type="signal peptide" evidence="4">
    <location>
        <begin position="1"/>
        <end position="18"/>
    </location>
</feature>
<feature type="chain" id="PRO_0000015550" description="Interleukin-13">
    <location>
        <begin position="19"/>
        <end position="131"/>
    </location>
</feature>
<feature type="glycosylation site" description="N-linked (GlcNAc...) asparagine" evidence="4">
    <location>
        <position position="42"/>
    </location>
</feature>
<feature type="glycosylation site" description="N-linked (GlcNAc...) asparagine" evidence="4">
    <location>
        <position position="52"/>
    </location>
</feature>
<feature type="glycosylation site" description="N-linked (GlcNAc...) asparagine" evidence="4">
    <location>
        <position position="75"/>
    </location>
</feature>
<feature type="disulfide bond" evidence="2">
    <location>
        <begin position="51"/>
        <end position="79"/>
    </location>
</feature>
<feature type="disulfide bond" evidence="2">
    <location>
        <begin position="67"/>
        <end position="93"/>
    </location>
</feature>
<dbReference type="EMBL" id="M23504">
    <property type="protein sequence ID" value="AAA40149.1"/>
    <property type="molecule type" value="mRNA"/>
</dbReference>
<dbReference type="CCDS" id="CCDS24683.1"/>
<dbReference type="PIR" id="E30552">
    <property type="entry name" value="E30552"/>
</dbReference>
<dbReference type="RefSeq" id="NP_032381.1">
    <property type="nucleotide sequence ID" value="NM_008355.3"/>
</dbReference>
<dbReference type="SMR" id="P20109"/>
<dbReference type="CORUM" id="P20109"/>
<dbReference type="FunCoup" id="P20109">
    <property type="interactions" value="387"/>
</dbReference>
<dbReference type="IntAct" id="P20109">
    <property type="interactions" value="2"/>
</dbReference>
<dbReference type="STRING" id="10090.ENSMUSP00000020650"/>
<dbReference type="GlyCosmos" id="P20109">
    <property type="glycosylation" value="3 sites, No reported glycans"/>
</dbReference>
<dbReference type="GlyGen" id="P20109">
    <property type="glycosylation" value="3 sites"/>
</dbReference>
<dbReference type="PaxDb" id="10090-ENSMUSP00000020650"/>
<dbReference type="ProteomicsDB" id="267315"/>
<dbReference type="ABCD" id="P20109">
    <property type="antibodies" value="1 sequenced antibody"/>
</dbReference>
<dbReference type="Antibodypedia" id="14499">
    <property type="antibodies" value="1434 antibodies from 46 providers"/>
</dbReference>
<dbReference type="DNASU" id="16163"/>
<dbReference type="Ensembl" id="ENSMUST00000020650.2">
    <property type="protein sequence ID" value="ENSMUSP00000020650.2"/>
    <property type="gene ID" value="ENSMUSG00000020383.2"/>
</dbReference>
<dbReference type="GeneID" id="16163"/>
<dbReference type="KEGG" id="mmu:16163"/>
<dbReference type="UCSC" id="uc007iwr.2">
    <property type="organism name" value="mouse"/>
</dbReference>
<dbReference type="AGR" id="MGI:96541"/>
<dbReference type="CTD" id="3596"/>
<dbReference type="MGI" id="MGI:96541">
    <property type="gene designation" value="Il13"/>
</dbReference>
<dbReference type="VEuPathDB" id="HostDB:ENSMUSG00000020383"/>
<dbReference type="eggNOG" id="ENOG502SZKX">
    <property type="taxonomic scope" value="Eukaryota"/>
</dbReference>
<dbReference type="GeneTree" id="ENSGT00390000003225"/>
<dbReference type="HOGENOM" id="CLU_158063_0_0_1"/>
<dbReference type="InParanoid" id="P20109"/>
<dbReference type="OMA" id="KTPLCNG"/>
<dbReference type="OrthoDB" id="9447464at2759"/>
<dbReference type="PhylomeDB" id="P20109"/>
<dbReference type="TreeFam" id="TF336383"/>
<dbReference type="Reactome" id="R-MMU-6785807">
    <property type="pathway name" value="Interleukin-4 and Interleukin-13 signaling"/>
</dbReference>
<dbReference type="BioGRID-ORCS" id="16163">
    <property type="hits" value="1 hit in 80 CRISPR screens"/>
</dbReference>
<dbReference type="PRO" id="PR:P20109"/>
<dbReference type="Proteomes" id="UP000000589">
    <property type="component" value="Chromosome 11"/>
</dbReference>
<dbReference type="RNAct" id="P20109">
    <property type="molecule type" value="protein"/>
</dbReference>
<dbReference type="Bgee" id="ENSMUSG00000020383">
    <property type="expression patterns" value="Expressed in mesodermal cell in embryo and 9 other cell types or tissues"/>
</dbReference>
<dbReference type="GO" id="GO:0005737">
    <property type="term" value="C:cytoplasm"/>
    <property type="evidence" value="ECO:0000314"/>
    <property type="project" value="MGI"/>
</dbReference>
<dbReference type="GO" id="GO:0009897">
    <property type="term" value="C:external side of plasma membrane"/>
    <property type="evidence" value="ECO:0000314"/>
    <property type="project" value="MGI"/>
</dbReference>
<dbReference type="GO" id="GO:0005615">
    <property type="term" value="C:extracellular space"/>
    <property type="evidence" value="ECO:0000314"/>
    <property type="project" value="MGI"/>
</dbReference>
<dbReference type="GO" id="GO:0005125">
    <property type="term" value="F:cytokine activity"/>
    <property type="evidence" value="ECO:0007669"/>
    <property type="project" value="UniProtKB-KW"/>
</dbReference>
<dbReference type="GO" id="GO:0005126">
    <property type="term" value="F:cytokine receptor binding"/>
    <property type="evidence" value="ECO:0007669"/>
    <property type="project" value="InterPro"/>
</dbReference>
<dbReference type="GO" id="GO:0071345">
    <property type="term" value="P:cellular response to cytokine stimulus"/>
    <property type="evidence" value="ECO:0000314"/>
    <property type="project" value="MGI"/>
</dbReference>
<dbReference type="GO" id="GO:0006955">
    <property type="term" value="P:immune response"/>
    <property type="evidence" value="ECO:0007669"/>
    <property type="project" value="InterPro"/>
</dbReference>
<dbReference type="GO" id="GO:0006954">
    <property type="term" value="P:inflammatory response"/>
    <property type="evidence" value="ECO:0000315"/>
    <property type="project" value="MGI"/>
</dbReference>
<dbReference type="GO" id="GO:0035772">
    <property type="term" value="P:interleukin-13-mediated signaling pathway"/>
    <property type="evidence" value="ECO:0007669"/>
    <property type="project" value="Ensembl"/>
</dbReference>
<dbReference type="GO" id="GO:0042116">
    <property type="term" value="P:macrophage activation"/>
    <property type="evidence" value="ECO:0007669"/>
    <property type="project" value="Ensembl"/>
</dbReference>
<dbReference type="GO" id="GO:1903660">
    <property type="term" value="P:negative regulation of complement-dependent cytotoxicity"/>
    <property type="evidence" value="ECO:0007669"/>
    <property type="project" value="Ensembl"/>
</dbReference>
<dbReference type="GO" id="GO:2000352">
    <property type="term" value="P:negative regulation of endothelial cell apoptotic process"/>
    <property type="evidence" value="ECO:0007669"/>
    <property type="project" value="Ensembl"/>
</dbReference>
<dbReference type="GO" id="GO:0050728">
    <property type="term" value="P:negative regulation of inflammatory response"/>
    <property type="evidence" value="ECO:0007669"/>
    <property type="project" value="Ensembl"/>
</dbReference>
<dbReference type="GO" id="GO:0120162">
    <property type="term" value="P:positive regulation of cold-induced thermogenesis"/>
    <property type="evidence" value="ECO:0000315"/>
    <property type="project" value="YuBioLab"/>
</dbReference>
<dbReference type="GO" id="GO:0002639">
    <property type="term" value="P:positive regulation of immunoglobulin production"/>
    <property type="evidence" value="ECO:0000315"/>
    <property type="project" value="MGI"/>
</dbReference>
<dbReference type="GO" id="GO:0032733">
    <property type="term" value="P:positive regulation of interleukin-10 production"/>
    <property type="evidence" value="ECO:0007669"/>
    <property type="project" value="Ensembl"/>
</dbReference>
<dbReference type="GO" id="GO:0043032">
    <property type="term" value="P:positive regulation of macrophage activation"/>
    <property type="evidence" value="ECO:0000315"/>
    <property type="project" value="BHF-UCL"/>
</dbReference>
<dbReference type="GO" id="GO:0043306">
    <property type="term" value="P:positive regulation of mast cell degranulation"/>
    <property type="evidence" value="ECO:0000315"/>
    <property type="project" value="MGI"/>
</dbReference>
<dbReference type="GO" id="GO:0045944">
    <property type="term" value="P:positive regulation of transcription by RNA polymerase II"/>
    <property type="evidence" value="ECO:0007669"/>
    <property type="project" value="Ensembl"/>
</dbReference>
<dbReference type="GO" id="GO:0009624">
    <property type="term" value="P:response to nematode"/>
    <property type="evidence" value="ECO:0000314"/>
    <property type="project" value="MGI"/>
</dbReference>
<dbReference type="GO" id="GO:0010269">
    <property type="term" value="P:response to selenium ion"/>
    <property type="evidence" value="ECO:0000314"/>
    <property type="project" value="MGI"/>
</dbReference>
<dbReference type="Gene3D" id="1.20.1250.10">
    <property type="match status" value="1"/>
</dbReference>
<dbReference type="InterPro" id="IPR009079">
    <property type="entry name" value="4_helix_cytokine-like_core"/>
</dbReference>
<dbReference type="InterPro" id="IPR020470">
    <property type="entry name" value="IL-13"/>
</dbReference>
<dbReference type="InterPro" id="IPR001325">
    <property type="entry name" value="IL-4/IL-13"/>
</dbReference>
<dbReference type="InterPro" id="IPR018096">
    <property type="entry name" value="IL-4/IL-13_CS"/>
</dbReference>
<dbReference type="PANTHER" id="PTHR48486">
    <property type="entry name" value="INTERLEUKIN-13"/>
    <property type="match status" value="1"/>
</dbReference>
<dbReference type="PANTHER" id="PTHR48486:SF1">
    <property type="entry name" value="INTERLEUKIN-13"/>
    <property type="match status" value="1"/>
</dbReference>
<dbReference type="Pfam" id="PF03487">
    <property type="entry name" value="IL13"/>
    <property type="match status" value="1"/>
</dbReference>
<dbReference type="PRINTS" id="PR01929">
    <property type="entry name" value="INTRLEUKIN13"/>
</dbReference>
<dbReference type="SMART" id="SM00190">
    <property type="entry name" value="IL4_13"/>
    <property type="match status" value="1"/>
</dbReference>
<dbReference type="SUPFAM" id="SSF47266">
    <property type="entry name" value="4-helical cytokines"/>
    <property type="match status" value="1"/>
</dbReference>
<dbReference type="PROSITE" id="PS00838">
    <property type="entry name" value="INTERLEUKIN_4_13"/>
    <property type="match status" value="1"/>
</dbReference>
<comment type="function">
    <text evidence="2 3 5 6 7 8 9">Cytokine that plays important roles in allergic inflammation and immune response to parasite infection (PubMed:15361238). Synergizes with IL2 in regulating interferon-gamma synthesis. Stimulates B-cell proliferation, and activation of eosinophils, basophils, and mast cells (By similarity). Plays an important role in controlling IL33 activity by modulating the production of transmembrane and soluble forms of interleukin-1 receptor-like 1/IL1RL1 (PubMed:34789557). Displays the capacity to antagonize Th1-driven proinflammatory immune response and downregulates synthesis of many proinflammatory cytokines including IL1, IL6, IL10, IL12 and TNF-alpha through a mechanism that partially involves suppression of NF-kappa-B (By similarity). Also functions on nonhematopoietic cells, including endothelial cells where it induces vascular cell adhesion protein 1/VCAM1, which is important in the recruitment of eosinophils. Exerts its biological effects through its receptors which comprises the IL4R chain and the IL13RA1 chain, to activate JAK1 and TYK2, leading to the activation of STAT6 (PubMed:34795444, PubMed:8871614). Aside from IL13RA1, another receptor IL13RA2 acts as a high affinity decoy for IL13 and mediates internalization and depletion of extracellular IL13 (PubMed:29305434).</text>
</comment>
<comment type="subunit">
    <text evidence="1">Interacts with IL13RA2.</text>
</comment>
<comment type="interaction">
    <interactant intactId="EBI-20559598">
        <id>P20109</id>
    </interactant>
    <interactant intactId="EBI-20260800">
        <id>O88786</id>
        <label>Il13ra2</label>
    </interactant>
    <organismsDiffer>false</organismsDiffer>
    <experiments>4</experiments>
</comment>
<comment type="subcellular location">
    <subcellularLocation>
        <location>Secreted</location>
    </subcellularLocation>
</comment>
<comment type="disruption phenotype">
    <text evidence="6 7">Deletion mice have increased eosinophilic inflammation and splenomegaly (PubMed:29305434). In addition, mice show exacerbated effects of IL33 administration, including increased immune cell infiltration in the peritoneum with expanded eosinophil and ILC2 populations, and reduced circulating and peritoneal sST2 (PubMed:34789557).</text>
</comment>
<comment type="similarity">
    <text evidence="10">Belongs to the IL-4/IL-13 family.</text>
</comment>
<gene>
    <name type="primary">Il13</name>
    <name type="synonym">Il-13</name>
</gene>
<keyword id="KW-0202">Cytokine</keyword>
<keyword id="KW-1015">Disulfide bond</keyword>
<keyword id="KW-0325">Glycoprotein</keyword>
<keyword id="KW-1185">Reference proteome</keyword>
<keyword id="KW-0964">Secreted</keyword>
<keyword id="KW-0732">Signal</keyword>
<organism>
    <name type="scientific">Mus musculus</name>
    <name type="common">Mouse</name>
    <dbReference type="NCBI Taxonomy" id="10090"/>
    <lineage>
        <taxon>Eukaryota</taxon>
        <taxon>Metazoa</taxon>
        <taxon>Chordata</taxon>
        <taxon>Craniata</taxon>
        <taxon>Vertebrata</taxon>
        <taxon>Euteleostomi</taxon>
        <taxon>Mammalia</taxon>
        <taxon>Eutheria</taxon>
        <taxon>Euarchontoglires</taxon>
        <taxon>Glires</taxon>
        <taxon>Rodentia</taxon>
        <taxon>Myomorpha</taxon>
        <taxon>Muroidea</taxon>
        <taxon>Muridae</taxon>
        <taxon>Murinae</taxon>
        <taxon>Mus</taxon>
        <taxon>Mus</taxon>
    </lineage>
</organism>
<evidence type="ECO:0000250" key="1"/>
<evidence type="ECO:0000250" key="2">
    <source>
        <dbReference type="UniProtKB" id="P35225"/>
    </source>
</evidence>
<evidence type="ECO:0000250" key="3">
    <source>
        <dbReference type="UniProtKB" id="P42203"/>
    </source>
</evidence>
<evidence type="ECO:0000255" key="4"/>
<evidence type="ECO:0000269" key="5">
    <source>
    </source>
</evidence>
<evidence type="ECO:0000269" key="6">
    <source>
    </source>
</evidence>
<evidence type="ECO:0000269" key="7">
    <source>
    </source>
</evidence>
<evidence type="ECO:0000269" key="8">
    <source>
    </source>
</evidence>
<evidence type="ECO:0000269" key="9">
    <source>
    </source>
</evidence>
<evidence type="ECO:0000305" key="10"/>
<name>IL13_MOUSE</name>
<accession>P20109</accession>
<proteinExistence type="evidence at protein level"/>
<reference key="1">
    <citation type="journal article" date="1989" name="J. Immunol.">
        <title>A family of small inducible proteins secreted by leukocytes are members of a new superfamily that includes leukocyte and fibroblast-derived inflammatory agents, growth factors, and indicators of various activation processes.</title>
        <authorList>
            <person name="Brown K.D."/>
            <person name="Zurawski S.M."/>
            <person name="Mosmann T.R."/>
            <person name="Zurawski G."/>
        </authorList>
    </citation>
    <scope>NUCLEOTIDE SEQUENCE [MRNA]</scope>
</reference>
<reference key="2">
    <citation type="journal article" date="1996" name="J. Immunol.">
        <title>Impaired IL-13-mediated functions of macrophages in STAT6-deficient mice.</title>
        <authorList>
            <person name="Takeda K."/>
            <person name="Kamanaka M."/>
            <person name="Tanaka T."/>
            <person name="Kishimoto T."/>
            <person name="Akira S."/>
        </authorList>
    </citation>
    <scope>FUNCTION</scope>
</reference>
<reference key="3">
    <citation type="journal article" date="2004" name="Immunol. Rev.">
        <title>Interleukin-4- and interleukin-13-mediated host protection against intestinal nematode parasites.</title>
        <authorList>
            <person name="Finkelman F.D."/>
            <person name="Shea-Donohue T."/>
            <person name="Morris S.C."/>
            <person name="Gildea L."/>
            <person name="Strait R."/>
            <person name="Madden K.B."/>
            <person name="Schopf L."/>
            <person name="Urban J.F. Jr."/>
        </authorList>
    </citation>
    <scope>FUNCTION</scope>
</reference>
<reference key="4">
    <citation type="journal article" date="2015" name="J. Biol. Chem.">
        <title>Th2 Cytokines Augment IL-31/IL-31RA Interactions via STAT6-dependent IL-31RA Expression.</title>
        <authorList>
            <person name="Edukulla R."/>
            <person name="Singh B."/>
            <person name="Jegga A.G."/>
            <person name="Sontake V."/>
            <person name="Dillon S.R."/>
            <person name="Madala S.K."/>
        </authorList>
    </citation>
    <scope>FUNCTION</scope>
</reference>
<reference key="5">
    <citation type="journal article" date="2018" name="J. Immunol.">
        <title>Modulation of the IL-33/IL-13 Axis in Obesity by IL-13Ralpha2.</title>
        <authorList>
            <person name="Duffen J."/>
            <person name="Zhang M."/>
            <person name="Masek-Hammerman K."/>
            <person name="Nunez A."/>
            <person name="Brennan A."/>
            <person name="Jones J.E.C."/>
            <person name="Morin J."/>
            <person name="Nocka K."/>
            <person name="Kasaian M."/>
        </authorList>
    </citation>
    <scope>FUNCTION</scope>
    <scope>DISRUPTION PHENOTYPE</scope>
</reference>
<reference key="6">
    <citation type="journal article" date="2021" name="Nat. Immunol.">
        <title>Homeostatic IL-13 in healthy skin directs dendritic cell differentiation to promote TH2 and inhibit TH17 cell polarization.</title>
        <authorList>
            <person name="Mayer J.U."/>
            <person name="Hilligan K.L."/>
            <person name="Chandler J.S."/>
            <person name="Eccles D.A."/>
            <person name="Old S.I."/>
            <person name="Domingues R.G."/>
            <person name="Yang J."/>
            <person name="Webb G.R."/>
            <person name="Munoz-Erazo L."/>
            <person name="Hyde E.J."/>
            <person name="Wakelin K.A."/>
            <person name="Tang S.C."/>
            <person name="Chappell S.C."/>
            <person name="von Daake S."/>
            <person name="Brombacher F."/>
            <person name="Mackay C.R."/>
            <person name="Sher A."/>
            <person name="Tussiwand R."/>
            <person name="Connor L.M."/>
            <person name="Gallego-Ortega D."/>
            <person name="Jankovic D."/>
            <person name="Le Gros G."/>
            <person name="Hepworth M.R."/>
            <person name="Lamiable O."/>
            <person name="Ronchese F."/>
        </authorList>
    </citation>
    <scope>FUNCTION</scope>
</reference>
<reference key="7">
    <citation type="journal article" date="2021" name="J. Immunol.">
        <title>IL-13 Controls IL-33 Activity through Modulation of ST2.</title>
        <authorList>
            <person name="Zhang M."/>
            <person name="Duffen J.L."/>
            <person name="Nocka K.H."/>
            <person name="Kasaian M.T."/>
        </authorList>
    </citation>
    <scope>FUNCTION</scope>
    <scope>DISRUPTION PHENOTYPE</scope>
</reference>
<protein>
    <recommendedName>
        <fullName>Interleukin-13</fullName>
        <shortName>IL-13</shortName>
    </recommendedName>
    <alternativeName>
        <fullName>T-cell activation protein P600</fullName>
    </alternativeName>
</protein>
<sequence>MALWVTAVLALACLGGLAAPGPVPRSVSLPLTLKELIEELSNITQDQTPLCNGSMVWSVDLAAGGFCVALDSLTNISNCNAIYRTQRILHGLCNRKAPTTVSSLPDTKIEVAHFITKLLSYTKQLFRHGPF</sequence>